<gene>
    <name evidence="1" type="primary">yfcJ</name>
    <name type="ordered locus">STM2372</name>
</gene>
<protein>
    <recommendedName>
        <fullName evidence="1">Uncharacterized MFS-type transporter YfcJ</fullName>
    </recommendedName>
</protein>
<comment type="subcellular location">
    <subcellularLocation>
        <location evidence="1">Cell inner membrane</location>
        <topology evidence="1">Multi-pass membrane protein</topology>
    </subcellularLocation>
</comment>
<comment type="similarity">
    <text evidence="1">Belongs to the major facilitator superfamily. YfcJ family.</text>
</comment>
<accession>Q8ZNB8</accession>
<keyword id="KW-0997">Cell inner membrane</keyword>
<keyword id="KW-1003">Cell membrane</keyword>
<keyword id="KW-0472">Membrane</keyword>
<keyword id="KW-1185">Reference proteome</keyword>
<keyword id="KW-0812">Transmembrane</keyword>
<keyword id="KW-1133">Transmembrane helix</keyword>
<keyword id="KW-0813">Transport</keyword>
<organism>
    <name type="scientific">Salmonella typhimurium (strain LT2 / SGSC1412 / ATCC 700720)</name>
    <dbReference type="NCBI Taxonomy" id="99287"/>
    <lineage>
        <taxon>Bacteria</taxon>
        <taxon>Pseudomonadati</taxon>
        <taxon>Pseudomonadota</taxon>
        <taxon>Gammaproteobacteria</taxon>
        <taxon>Enterobacterales</taxon>
        <taxon>Enterobacteriaceae</taxon>
        <taxon>Salmonella</taxon>
    </lineage>
</organism>
<reference key="1">
    <citation type="journal article" date="2001" name="Nature">
        <title>Complete genome sequence of Salmonella enterica serovar Typhimurium LT2.</title>
        <authorList>
            <person name="McClelland M."/>
            <person name="Sanderson K.E."/>
            <person name="Spieth J."/>
            <person name="Clifton S.W."/>
            <person name="Latreille P."/>
            <person name="Courtney L."/>
            <person name="Porwollik S."/>
            <person name="Ali J."/>
            <person name="Dante M."/>
            <person name="Du F."/>
            <person name="Hou S."/>
            <person name="Layman D."/>
            <person name="Leonard S."/>
            <person name="Nguyen C."/>
            <person name="Scott K."/>
            <person name="Holmes A."/>
            <person name="Grewal N."/>
            <person name="Mulvaney E."/>
            <person name="Ryan E."/>
            <person name="Sun H."/>
            <person name="Florea L."/>
            <person name="Miller W."/>
            <person name="Stoneking T."/>
            <person name="Nhan M."/>
            <person name="Waterston R."/>
            <person name="Wilson R.K."/>
        </authorList>
    </citation>
    <scope>NUCLEOTIDE SEQUENCE [LARGE SCALE GENOMIC DNA]</scope>
    <source>
        <strain>LT2 / SGSC1412 / ATCC 700720</strain>
    </source>
</reference>
<sequence>MTAVSQKTTTPSANFSLFRIAFAVFLTYMTVGLPLPVIPLFVHHELGYSNTMVGIAVGIQFFATVLTRGYAGRLADQYGAKRSALQGMLACGLAGAAWLLAALLPVSAPVKFALLIVGRLILGFGESQLLTGTLTWGLGLVGPTRSGKVMSWNGMAIYGALAAGAPLGLLIHSHFGFAALAGTTMVLPLLAWAFNGTVRKVPAYTGERPSLWSVVGLIWKPGLGLALQGVGFAVIGTFISLYFVSNGWTMAGFTLTAFGGAFVLMRILFGWMPDRFGGVKVAVVSLLVETAGLLLLWLAPTAWIALVGAALTGAGCSLIFPALGVEVVKRVPAQVRGTALGGYAAFQDISYGVTGPLAGMLATSYGYPSVFLAGAISAVVGILVTILSFRRG</sequence>
<dbReference type="EMBL" id="AE006468">
    <property type="protein sequence ID" value="AAL21273.1"/>
    <property type="molecule type" value="Genomic_DNA"/>
</dbReference>
<dbReference type="RefSeq" id="NP_461314.1">
    <property type="nucleotide sequence ID" value="NC_003197.2"/>
</dbReference>
<dbReference type="RefSeq" id="WP_000127734.1">
    <property type="nucleotide sequence ID" value="NC_003197.2"/>
</dbReference>
<dbReference type="SMR" id="Q8ZNB8"/>
<dbReference type="STRING" id="99287.STM2372"/>
<dbReference type="PaxDb" id="99287-STM2372"/>
<dbReference type="GeneID" id="1253894"/>
<dbReference type="KEGG" id="stm:STM2372"/>
<dbReference type="PATRIC" id="fig|99287.12.peg.2511"/>
<dbReference type="HOGENOM" id="CLU_001265_10_3_6"/>
<dbReference type="OMA" id="VLFGWMP"/>
<dbReference type="PhylomeDB" id="Q8ZNB8"/>
<dbReference type="BioCyc" id="SENT99287:STM2372-MONOMER"/>
<dbReference type="Proteomes" id="UP000001014">
    <property type="component" value="Chromosome"/>
</dbReference>
<dbReference type="GO" id="GO:0005886">
    <property type="term" value="C:plasma membrane"/>
    <property type="evidence" value="ECO:0000318"/>
    <property type="project" value="GO_Central"/>
</dbReference>
<dbReference type="GO" id="GO:0022857">
    <property type="term" value="F:transmembrane transporter activity"/>
    <property type="evidence" value="ECO:0007669"/>
    <property type="project" value="UniProtKB-UniRule"/>
</dbReference>
<dbReference type="CDD" id="cd17489">
    <property type="entry name" value="MFS_YfcJ_like"/>
    <property type="match status" value="1"/>
</dbReference>
<dbReference type="Gene3D" id="1.20.1250.20">
    <property type="entry name" value="MFS general substrate transporter like domains"/>
    <property type="match status" value="1"/>
</dbReference>
<dbReference type="HAMAP" id="MF_02091">
    <property type="entry name" value="MFS_YfcJ"/>
    <property type="match status" value="1"/>
</dbReference>
<dbReference type="InterPro" id="IPR011701">
    <property type="entry name" value="MFS"/>
</dbReference>
<dbReference type="InterPro" id="IPR020846">
    <property type="entry name" value="MFS_dom"/>
</dbReference>
<dbReference type="InterPro" id="IPR036259">
    <property type="entry name" value="MFS_trans_sf"/>
</dbReference>
<dbReference type="InterPro" id="IPR050171">
    <property type="entry name" value="MFS_Transporters"/>
</dbReference>
<dbReference type="InterPro" id="IPR037541">
    <property type="entry name" value="MFS_YfcJ"/>
</dbReference>
<dbReference type="NCBIfam" id="NF003477">
    <property type="entry name" value="PRK05122.1"/>
    <property type="match status" value="1"/>
</dbReference>
<dbReference type="NCBIfam" id="NF009048">
    <property type="entry name" value="PRK12382.1"/>
    <property type="match status" value="1"/>
</dbReference>
<dbReference type="PANTHER" id="PTHR23517:SF1">
    <property type="match status" value="1"/>
</dbReference>
<dbReference type="PANTHER" id="PTHR23517">
    <property type="entry name" value="RESISTANCE PROTEIN MDTM, PUTATIVE-RELATED-RELATED"/>
    <property type="match status" value="1"/>
</dbReference>
<dbReference type="Pfam" id="PF07690">
    <property type="entry name" value="MFS_1"/>
    <property type="match status" value="1"/>
</dbReference>
<dbReference type="SUPFAM" id="SSF103473">
    <property type="entry name" value="MFS general substrate transporter"/>
    <property type="match status" value="1"/>
</dbReference>
<dbReference type="PROSITE" id="PS50850">
    <property type="entry name" value="MFS"/>
    <property type="match status" value="1"/>
</dbReference>
<evidence type="ECO:0000255" key="1">
    <source>
        <dbReference type="HAMAP-Rule" id="MF_02091"/>
    </source>
</evidence>
<name>YFCJ_SALTY</name>
<proteinExistence type="inferred from homology"/>
<feature type="chain" id="PRO_0000087804" description="Uncharacterized MFS-type transporter YfcJ">
    <location>
        <begin position="1"/>
        <end position="392"/>
    </location>
</feature>
<feature type="transmembrane region" description="Helical" evidence="1">
    <location>
        <begin position="22"/>
        <end position="42"/>
    </location>
</feature>
<feature type="transmembrane region" description="Helical" evidence="1">
    <location>
        <begin position="46"/>
        <end position="66"/>
    </location>
</feature>
<feature type="transmembrane region" description="Helical" evidence="1">
    <location>
        <begin position="97"/>
        <end position="117"/>
    </location>
</feature>
<feature type="transmembrane region" description="Helical" evidence="1">
    <location>
        <begin position="121"/>
        <end position="141"/>
    </location>
</feature>
<feature type="transmembrane region" description="Helical" evidence="1">
    <location>
        <begin position="151"/>
        <end position="171"/>
    </location>
</feature>
<feature type="transmembrane region" description="Helical" evidence="1">
    <location>
        <begin position="174"/>
        <end position="194"/>
    </location>
</feature>
<feature type="transmembrane region" description="Helical" evidence="1">
    <location>
        <begin position="224"/>
        <end position="244"/>
    </location>
</feature>
<feature type="transmembrane region" description="Helical" evidence="1">
    <location>
        <begin position="252"/>
        <end position="272"/>
    </location>
</feature>
<feature type="transmembrane region" description="Helical" evidence="1">
    <location>
        <begin position="276"/>
        <end position="298"/>
    </location>
</feature>
<feature type="transmembrane region" description="Helical" evidence="1">
    <location>
        <begin position="342"/>
        <end position="362"/>
    </location>
</feature>
<feature type="transmembrane region" description="Helical" evidence="1">
    <location>
        <begin position="369"/>
        <end position="389"/>
    </location>
</feature>